<evidence type="ECO:0000255" key="1">
    <source>
        <dbReference type="HAMAP-Rule" id="MF_00003"/>
    </source>
</evidence>
<keyword id="KW-0963">Cytoplasm</keyword>
<keyword id="KW-0690">Ribosome biogenesis</keyword>
<accession>B8D7R3</accession>
<comment type="function">
    <text evidence="1">One of several proteins that assist in the late maturation steps of the functional core of the 30S ribosomal subunit. Associates with free 30S ribosomal subunits (but not with 30S subunits that are part of 70S ribosomes or polysomes). Required for efficient processing of 16S rRNA. May interact with the 5'-terminal helix region of 16S rRNA.</text>
</comment>
<comment type="subunit">
    <text evidence="1">Monomer. Binds 30S ribosomal subunits, but not 50S ribosomal subunits or 70S ribosomes.</text>
</comment>
<comment type="subcellular location">
    <subcellularLocation>
        <location evidence="1">Cytoplasm</location>
    </subcellularLocation>
</comment>
<comment type="similarity">
    <text evidence="1">Belongs to the RbfA family.</text>
</comment>
<reference key="1">
    <citation type="journal article" date="2009" name="Science">
        <title>The dynamics and time scale of ongoing genomic erosion in symbiotic bacteria.</title>
        <authorList>
            <person name="Moran N.A."/>
            <person name="McLaughlin H.J."/>
            <person name="Sorek R."/>
        </authorList>
    </citation>
    <scope>NUCLEOTIDE SEQUENCE [LARGE SCALE GENOMIC DNA]</scope>
    <source>
        <strain>Tuc7</strain>
    </source>
</reference>
<organism>
    <name type="scientific">Buchnera aphidicola subsp. Acyrthosiphon pisum (strain Tuc7)</name>
    <dbReference type="NCBI Taxonomy" id="561501"/>
    <lineage>
        <taxon>Bacteria</taxon>
        <taxon>Pseudomonadati</taxon>
        <taxon>Pseudomonadota</taxon>
        <taxon>Gammaproteobacteria</taxon>
        <taxon>Enterobacterales</taxon>
        <taxon>Erwiniaceae</taxon>
        <taxon>Buchnera</taxon>
    </lineage>
</organism>
<dbReference type="EMBL" id="CP001158">
    <property type="protein sequence ID" value="ACL30178.1"/>
    <property type="molecule type" value="Genomic_DNA"/>
</dbReference>
<dbReference type="RefSeq" id="WP_012619526.1">
    <property type="nucleotide sequence ID" value="NC_011834.1"/>
</dbReference>
<dbReference type="SMR" id="B8D7R3"/>
<dbReference type="KEGG" id="bau:BUAPTUC7_370"/>
<dbReference type="HOGENOM" id="CLU_089475_5_2_6"/>
<dbReference type="GO" id="GO:0005829">
    <property type="term" value="C:cytosol"/>
    <property type="evidence" value="ECO:0007669"/>
    <property type="project" value="TreeGrafter"/>
</dbReference>
<dbReference type="GO" id="GO:0043024">
    <property type="term" value="F:ribosomal small subunit binding"/>
    <property type="evidence" value="ECO:0007669"/>
    <property type="project" value="TreeGrafter"/>
</dbReference>
<dbReference type="GO" id="GO:0030490">
    <property type="term" value="P:maturation of SSU-rRNA"/>
    <property type="evidence" value="ECO:0007669"/>
    <property type="project" value="UniProtKB-UniRule"/>
</dbReference>
<dbReference type="Gene3D" id="3.30.300.20">
    <property type="match status" value="1"/>
</dbReference>
<dbReference type="HAMAP" id="MF_00003">
    <property type="entry name" value="RbfA"/>
    <property type="match status" value="1"/>
</dbReference>
<dbReference type="InterPro" id="IPR015946">
    <property type="entry name" value="KH_dom-like_a/b"/>
</dbReference>
<dbReference type="InterPro" id="IPR000238">
    <property type="entry name" value="RbfA"/>
</dbReference>
<dbReference type="InterPro" id="IPR023799">
    <property type="entry name" value="RbfA_dom_sf"/>
</dbReference>
<dbReference type="InterPro" id="IPR020053">
    <property type="entry name" value="Ribosome-bd_factorA_CS"/>
</dbReference>
<dbReference type="NCBIfam" id="TIGR00082">
    <property type="entry name" value="rbfA"/>
    <property type="match status" value="1"/>
</dbReference>
<dbReference type="PANTHER" id="PTHR33515">
    <property type="entry name" value="RIBOSOME-BINDING FACTOR A, CHLOROPLASTIC-RELATED"/>
    <property type="match status" value="1"/>
</dbReference>
<dbReference type="PANTHER" id="PTHR33515:SF1">
    <property type="entry name" value="RIBOSOME-BINDING FACTOR A, CHLOROPLASTIC-RELATED"/>
    <property type="match status" value="1"/>
</dbReference>
<dbReference type="Pfam" id="PF02033">
    <property type="entry name" value="RBFA"/>
    <property type="match status" value="1"/>
</dbReference>
<dbReference type="SUPFAM" id="SSF89919">
    <property type="entry name" value="Ribosome-binding factor A, RbfA"/>
    <property type="match status" value="1"/>
</dbReference>
<dbReference type="PROSITE" id="PS01319">
    <property type="entry name" value="RBFA"/>
    <property type="match status" value="1"/>
</dbReference>
<gene>
    <name evidence="1" type="primary">rbfA</name>
    <name type="ordered locus">BUAPTUC7_370</name>
</gene>
<sequence>MEKLFNRSDRIAQELQKKIAAIIQHSLKDPRIKTIITVSEVQVSKDLSYAQIFVSFLESDNNEKVKKKITLLNRASSYIRKLLCKRMKLRIVPNIIFHHDDSFLKGNKISCILENLTKK</sequence>
<name>RBFA_BUCAT</name>
<feature type="chain" id="PRO_1000193238" description="Ribosome-binding factor A">
    <location>
        <begin position="1"/>
        <end position="119"/>
    </location>
</feature>
<protein>
    <recommendedName>
        <fullName evidence="1">Ribosome-binding factor A</fullName>
    </recommendedName>
</protein>
<proteinExistence type="inferred from homology"/>